<accession>Q82WC9</accession>
<feature type="chain" id="PRO_0000102702" description="Ribosome-binding factor A">
    <location>
        <begin position="1"/>
        <end position="117"/>
    </location>
</feature>
<reference key="1">
    <citation type="journal article" date="2003" name="J. Bacteriol.">
        <title>Complete genome sequence of the ammonia-oxidizing bacterium and obligate chemolithoautotroph Nitrosomonas europaea.</title>
        <authorList>
            <person name="Chain P."/>
            <person name="Lamerdin J.E."/>
            <person name="Larimer F.W."/>
            <person name="Regala W."/>
            <person name="Lao V."/>
            <person name="Land M.L."/>
            <person name="Hauser L."/>
            <person name="Hooper A.B."/>
            <person name="Klotz M.G."/>
            <person name="Norton J."/>
            <person name="Sayavedra-Soto L.A."/>
            <person name="Arciero D.M."/>
            <person name="Hommes N.G."/>
            <person name="Whittaker M.M."/>
            <person name="Arp D.J."/>
        </authorList>
    </citation>
    <scope>NUCLEOTIDE SEQUENCE [LARGE SCALE GENOMIC DNA]</scope>
    <source>
        <strain>ATCC 19718 / CIP 103999 / KCTC 2705 / NBRC 14298</strain>
    </source>
</reference>
<sequence>MSRDFSRTVRVADQIQRELALLIQNEIMDPRVGMVTLTGVEVTRDYAYAKVFYTTLGGDENIQLVEEGLKHAAGFLRSQLAGKIRLRVVPQLQFVYDESVERGMKLSRLIDEAVGKA</sequence>
<proteinExistence type="inferred from homology"/>
<organism>
    <name type="scientific">Nitrosomonas europaea (strain ATCC 19718 / CIP 103999 / KCTC 2705 / NBRC 14298)</name>
    <dbReference type="NCBI Taxonomy" id="228410"/>
    <lineage>
        <taxon>Bacteria</taxon>
        <taxon>Pseudomonadati</taxon>
        <taxon>Pseudomonadota</taxon>
        <taxon>Betaproteobacteria</taxon>
        <taxon>Nitrosomonadales</taxon>
        <taxon>Nitrosomonadaceae</taxon>
        <taxon>Nitrosomonas</taxon>
    </lineage>
</organism>
<keyword id="KW-0963">Cytoplasm</keyword>
<keyword id="KW-1185">Reference proteome</keyword>
<keyword id="KW-0690">Ribosome biogenesis</keyword>
<dbReference type="EMBL" id="AL954747">
    <property type="protein sequence ID" value="CAD84673.1"/>
    <property type="molecule type" value="Genomic_DNA"/>
</dbReference>
<dbReference type="RefSeq" id="WP_011111374.1">
    <property type="nucleotide sequence ID" value="NC_004757.1"/>
</dbReference>
<dbReference type="SMR" id="Q82WC9"/>
<dbReference type="STRING" id="228410.NE0762"/>
<dbReference type="GeneID" id="87103953"/>
<dbReference type="KEGG" id="neu:NE0762"/>
<dbReference type="eggNOG" id="COG0858">
    <property type="taxonomic scope" value="Bacteria"/>
</dbReference>
<dbReference type="HOGENOM" id="CLU_089475_5_0_4"/>
<dbReference type="OrthoDB" id="307788at2"/>
<dbReference type="PhylomeDB" id="Q82WC9"/>
<dbReference type="Proteomes" id="UP000001416">
    <property type="component" value="Chromosome"/>
</dbReference>
<dbReference type="GO" id="GO:0005829">
    <property type="term" value="C:cytosol"/>
    <property type="evidence" value="ECO:0007669"/>
    <property type="project" value="TreeGrafter"/>
</dbReference>
<dbReference type="GO" id="GO:0043024">
    <property type="term" value="F:ribosomal small subunit binding"/>
    <property type="evidence" value="ECO:0007669"/>
    <property type="project" value="TreeGrafter"/>
</dbReference>
<dbReference type="GO" id="GO:0030490">
    <property type="term" value="P:maturation of SSU-rRNA"/>
    <property type="evidence" value="ECO:0007669"/>
    <property type="project" value="UniProtKB-UniRule"/>
</dbReference>
<dbReference type="Gene3D" id="3.30.300.20">
    <property type="match status" value="1"/>
</dbReference>
<dbReference type="HAMAP" id="MF_00003">
    <property type="entry name" value="RbfA"/>
    <property type="match status" value="1"/>
</dbReference>
<dbReference type="InterPro" id="IPR015946">
    <property type="entry name" value="KH_dom-like_a/b"/>
</dbReference>
<dbReference type="InterPro" id="IPR000238">
    <property type="entry name" value="RbfA"/>
</dbReference>
<dbReference type="InterPro" id="IPR023799">
    <property type="entry name" value="RbfA_dom_sf"/>
</dbReference>
<dbReference type="InterPro" id="IPR020053">
    <property type="entry name" value="Ribosome-bd_factorA_CS"/>
</dbReference>
<dbReference type="NCBIfam" id="TIGR00082">
    <property type="entry name" value="rbfA"/>
    <property type="match status" value="1"/>
</dbReference>
<dbReference type="PANTHER" id="PTHR33515">
    <property type="entry name" value="RIBOSOME-BINDING FACTOR A, CHLOROPLASTIC-RELATED"/>
    <property type="match status" value="1"/>
</dbReference>
<dbReference type="PANTHER" id="PTHR33515:SF1">
    <property type="entry name" value="RIBOSOME-BINDING FACTOR A, CHLOROPLASTIC-RELATED"/>
    <property type="match status" value="1"/>
</dbReference>
<dbReference type="Pfam" id="PF02033">
    <property type="entry name" value="RBFA"/>
    <property type="match status" value="1"/>
</dbReference>
<dbReference type="SUPFAM" id="SSF89919">
    <property type="entry name" value="Ribosome-binding factor A, RbfA"/>
    <property type="match status" value="1"/>
</dbReference>
<dbReference type="PROSITE" id="PS01319">
    <property type="entry name" value="RBFA"/>
    <property type="match status" value="1"/>
</dbReference>
<name>RBFA_NITEU</name>
<comment type="function">
    <text evidence="1">One of several proteins that assist in the late maturation steps of the functional core of the 30S ribosomal subunit. Associates with free 30S ribosomal subunits (but not with 30S subunits that are part of 70S ribosomes or polysomes). Required for efficient processing of 16S rRNA. May interact with the 5'-terminal helix region of 16S rRNA.</text>
</comment>
<comment type="subunit">
    <text evidence="1">Monomer. Binds 30S ribosomal subunits, but not 50S ribosomal subunits or 70S ribosomes.</text>
</comment>
<comment type="subcellular location">
    <subcellularLocation>
        <location evidence="1">Cytoplasm</location>
    </subcellularLocation>
</comment>
<comment type="similarity">
    <text evidence="1">Belongs to the RbfA family.</text>
</comment>
<evidence type="ECO:0000255" key="1">
    <source>
        <dbReference type="HAMAP-Rule" id="MF_00003"/>
    </source>
</evidence>
<protein>
    <recommendedName>
        <fullName evidence="1">Ribosome-binding factor A</fullName>
    </recommendedName>
</protein>
<gene>
    <name evidence="1" type="primary">rbfA</name>
    <name type="ordered locus">NE0762</name>
</gene>